<sequence>MAELTTLARPYAKAAFEHAQAHQQLANWSAMLGLAAAVSQDDTMQRMLKAPRVTSAQKATTFIEVCGEKFDAKAQNFIHVVAENDRLPLLPEIAELFDLYKAEQEKSVDVDVTSAFALNQEQQDKLAKVLSARLGREVRLHAAEDASLIGGVVIRAGDLVIDGSVRGKIAKLAEALKS</sequence>
<name>ATPD_PSESM</name>
<comment type="function">
    <text evidence="1">F(1)F(0) ATP synthase produces ATP from ADP in the presence of a proton or sodium gradient. F-type ATPases consist of two structural domains, F(1) containing the extramembraneous catalytic core and F(0) containing the membrane proton channel, linked together by a central stalk and a peripheral stalk. During catalysis, ATP synthesis in the catalytic domain of F(1) is coupled via a rotary mechanism of the central stalk subunits to proton translocation.</text>
</comment>
<comment type="function">
    <text evidence="1">This protein is part of the stalk that links CF(0) to CF(1). It either transmits conformational changes from CF(0) to CF(1) or is implicated in proton conduction.</text>
</comment>
<comment type="subunit">
    <text evidence="1">F-type ATPases have 2 components, F(1) - the catalytic core - and F(0) - the membrane proton channel. F(1) has five subunits: alpha(3), beta(3), gamma(1), delta(1), epsilon(1). F(0) has three main subunits: a(1), b(2) and c(10-14). The alpha and beta chains form an alternating ring which encloses part of the gamma chain. F(1) is attached to F(0) by a central stalk formed by the gamma and epsilon chains, while a peripheral stalk is formed by the delta and b chains.</text>
</comment>
<comment type="subcellular location">
    <subcellularLocation>
        <location evidence="1">Cell inner membrane</location>
        <topology evidence="1">Peripheral membrane protein</topology>
    </subcellularLocation>
</comment>
<comment type="similarity">
    <text evidence="1">Belongs to the ATPase delta chain family.</text>
</comment>
<dbReference type="EMBL" id="AE016853">
    <property type="protein sequence ID" value="AAO59015.1"/>
    <property type="molecule type" value="Genomic_DNA"/>
</dbReference>
<dbReference type="RefSeq" id="NP_795320.1">
    <property type="nucleotide sequence ID" value="NC_004578.1"/>
</dbReference>
<dbReference type="RefSeq" id="WP_011105592.1">
    <property type="nucleotide sequence ID" value="NC_004578.1"/>
</dbReference>
<dbReference type="SMR" id="Q87TT1"/>
<dbReference type="STRING" id="223283.PSPTO_5602"/>
<dbReference type="GeneID" id="1187294"/>
<dbReference type="KEGG" id="pst:PSPTO_5602"/>
<dbReference type="PATRIC" id="fig|223283.9.peg.5739"/>
<dbReference type="eggNOG" id="COG0712">
    <property type="taxonomic scope" value="Bacteria"/>
</dbReference>
<dbReference type="HOGENOM" id="CLU_085114_3_0_6"/>
<dbReference type="OrthoDB" id="9816221at2"/>
<dbReference type="PhylomeDB" id="Q87TT1"/>
<dbReference type="Proteomes" id="UP000002515">
    <property type="component" value="Chromosome"/>
</dbReference>
<dbReference type="GO" id="GO:0005886">
    <property type="term" value="C:plasma membrane"/>
    <property type="evidence" value="ECO:0007669"/>
    <property type="project" value="UniProtKB-SubCell"/>
</dbReference>
<dbReference type="GO" id="GO:0045259">
    <property type="term" value="C:proton-transporting ATP synthase complex"/>
    <property type="evidence" value="ECO:0007669"/>
    <property type="project" value="UniProtKB-KW"/>
</dbReference>
<dbReference type="GO" id="GO:0046933">
    <property type="term" value="F:proton-transporting ATP synthase activity, rotational mechanism"/>
    <property type="evidence" value="ECO:0007669"/>
    <property type="project" value="UniProtKB-UniRule"/>
</dbReference>
<dbReference type="Gene3D" id="1.10.520.20">
    <property type="entry name" value="N-terminal domain of the delta subunit of the F1F0-ATP synthase"/>
    <property type="match status" value="1"/>
</dbReference>
<dbReference type="HAMAP" id="MF_01416">
    <property type="entry name" value="ATP_synth_delta_bact"/>
    <property type="match status" value="1"/>
</dbReference>
<dbReference type="InterPro" id="IPR026015">
    <property type="entry name" value="ATP_synth_OSCP/delta_N_sf"/>
</dbReference>
<dbReference type="InterPro" id="IPR000711">
    <property type="entry name" value="ATPase_OSCP/dsu"/>
</dbReference>
<dbReference type="NCBIfam" id="TIGR01145">
    <property type="entry name" value="ATP_synt_delta"/>
    <property type="match status" value="1"/>
</dbReference>
<dbReference type="NCBIfam" id="NF004402">
    <property type="entry name" value="PRK05758.2-2"/>
    <property type="match status" value="1"/>
</dbReference>
<dbReference type="PANTHER" id="PTHR11910">
    <property type="entry name" value="ATP SYNTHASE DELTA CHAIN"/>
    <property type="match status" value="1"/>
</dbReference>
<dbReference type="Pfam" id="PF00213">
    <property type="entry name" value="OSCP"/>
    <property type="match status" value="1"/>
</dbReference>
<dbReference type="PRINTS" id="PR00125">
    <property type="entry name" value="ATPASEDELTA"/>
</dbReference>
<dbReference type="SUPFAM" id="SSF47928">
    <property type="entry name" value="N-terminal domain of the delta subunit of the F1F0-ATP synthase"/>
    <property type="match status" value="1"/>
</dbReference>
<reference key="1">
    <citation type="journal article" date="2003" name="Proc. Natl. Acad. Sci. U.S.A.">
        <title>The complete genome sequence of the Arabidopsis and tomato pathogen Pseudomonas syringae pv. tomato DC3000.</title>
        <authorList>
            <person name="Buell C.R."/>
            <person name="Joardar V."/>
            <person name="Lindeberg M."/>
            <person name="Selengut J."/>
            <person name="Paulsen I.T."/>
            <person name="Gwinn M.L."/>
            <person name="Dodson R.J."/>
            <person name="DeBoy R.T."/>
            <person name="Durkin A.S."/>
            <person name="Kolonay J.F."/>
            <person name="Madupu R."/>
            <person name="Daugherty S.C."/>
            <person name="Brinkac L.M."/>
            <person name="Beanan M.J."/>
            <person name="Haft D.H."/>
            <person name="Nelson W.C."/>
            <person name="Davidsen T.M."/>
            <person name="Zafar N."/>
            <person name="Zhou L."/>
            <person name="Liu J."/>
            <person name="Yuan Q."/>
            <person name="Khouri H.M."/>
            <person name="Fedorova N.B."/>
            <person name="Tran B."/>
            <person name="Russell D."/>
            <person name="Berry K.J."/>
            <person name="Utterback T.R."/>
            <person name="Van Aken S.E."/>
            <person name="Feldblyum T.V."/>
            <person name="D'Ascenzo M."/>
            <person name="Deng W.-L."/>
            <person name="Ramos A.R."/>
            <person name="Alfano J.R."/>
            <person name="Cartinhour S."/>
            <person name="Chatterjee A.K."/>
            <person name="Delaney T.P."/>
            <person name="Lazarowitz S.G."/>
            <person name="Martin G.B."/>
            <person name="Schneider D.J."/>
            <person name="Tang X."/>
            <person name="Bender C.L."/>
            <person name="White O."/>
            <person name="Fraser C.M."/>
            <person name="Collmer A."/>
        </authorList>
    </citation>
    <scope>NUCLEOTIDE SEQUENCE [LARGE SCALE GENOMIC DNA]</scope>
    <source>
        <strain>ATCC BAA-871 / DC3000</strain>
    </source>
</reference>
<keyword id="KW-0066">ATP synthesis</keyword>
<keyword id="KW-0997">Cell inner membrane</keyword>
<keyword id="KW-1003">Cell membrane</keyword>
<keyword id="KW-0139">CF(1)</keyword>
<keyword id="KW-0375">Hydrogen ion transport</keyword>
<keyword id="KW-0406">Ion transport</keyword>
<keyword id="KW-0472">Membrane</keyword>
<keyword id="KW-1185">Reference proteome</keyword>
<keyword id="KW-0813">Transport</keyword>
<accession>Q87TT1</accession>
<proteinExistence type="inferred from homology"/>
<evidence type="ECO:0000255" key="1">
    <source>
        <dbReference type="HAMAP-Rule" id="MF_01416"/>
    </source>
</evidence>
<protein>
    <recommendedName>
        <fullName evidence="1">ATP synthase subunit delta</fullName>
    </recommendedName>
    <alternativeName>
        <fullName evidence="1">ATP synthase F(1) sector subunit delta</fullName>
    </alternativeName>
    <alternativeName>
        <fullName evidence="1">F-type ATPase subunit delta</fullName>
        <shortName evidence="1">F-ATPase subunit delta</shortName>
    </alternativeName>
</protein>
<organism>
    <name type="scientific">Pseudomonas syringae pv. tomato (strain ATCC BAA-871 / DC3000)</name>
    <dbReference type="NCBI Taxonomy" id="223283"/>
    <lineage>
        <taxon>Bacteria</taxon>
        <taxon>Pseudomonadati</taxon>
        <taxon>Pseudomonadota</taxon>
        <taxon>Gammaproteobacteria</taxon>
        <taxon>Pseudomonadales</taxon>
        <taxon>Pseudomonadaceae</taxon>
        <taxon>Pseudomonas</taxon>
    </lineage>
</organism>
<feature type="chain" id="PRO_0000371081" description="ATP synthase subunit delta">
    <location>
        <begin position="1"/>
        <end position="178"/>
    </location>
</feature>
<gene>
    <name evidence="1" type="primary">atpH</name>
    <name type="ordered locus">PSPTO_5602</name>
    <name type="ORF">PSPTO5602</name>
</gene>